<proteinExistence type="inferred from homology"/>
<gene>
    <name evidence="1" type="primary">rpl3</name>
    <name evidence="1" type="synonym">rpl3Ab</name>
    <name type="ordered locus">SSO0719</name>
    <name type="ORF">C10_011</name>
</gene>
<feature type="chain" id="PRO_0000077222" description="Large ribosomal subunit protein uL3">
    <location>
        <begin position="1"/>
        <end position="351"/>
    </location>
</feature>
<feature type="region of interest" description="Disordered" evidence="2">
    <location>
        <begin position="1"/>
        <end position="31"/>
    </location>
</feature>
<feature type="region of interest" description="Disordered" evidence="2">
    <location>
        <begin position="246"/>
        <end position="271"/>
    </location>
</feature>
<evidence type="ECO:0000255" key="1">
    <source>
        <dbReference type="HAMAP-Rule" id="MF_01325"/>
    </source>
</evidence>
<evidence type="ECO:0000256" key="2">
    <source>
        <dbReference type="SAM" id="MobiDB-lite"/>
    </source>
</evidence>
<evidence type="ECO:0000305" key="3"/>
<comment type="function">
    <text evidence="1">One of the primary rRNA binding proteins, it binds directly near the 3'-end of the 23S rRNA, where it nucleates assembly of the 50S subunit.</text>
</comment>
<comment type="subunit">
    <text evidence="1">Part of the 50S ribosomal subunit. Forms a cluster with proteins L14 and L24e.</text>
</comment>
<comment type="similarity">
    <text evidence="1">Belongs to the universal ribosomal protein uL3 family.</text>
</comment>
<dbReference type="EMBL" id="Y18930">
    <property type="protein sequence ID" value="CAB57584.1"/>
    <property type="molecule type" value="Genomic_DNA"/>
</dbReference>
<dbReference type="EMBL" id="AE006641">
    <property type="protein sequence ID" value="AAK41018.1"/>
    <property type="molecule type" value="Genomic_DNA"/>
</dbReference>
<dbReference type="PIR" id="C90220">
    <property type="entry name" value="C90220"/>
</dbReference>
<dbReference type="RefSeq" id="WP_009991283.1">
    <property type="nucleotide sequence ID" value="NC_002754.1"/>
</dbReference>
<dbReference type="SMR" id="Q9UXA8"/>
<dbReference type="FunCoup" id="Q9UXA8">
    <property type="interactions" value="150"/>
</dbReference>
<dbReference type="STRING" id="273057.SSO0719"/>
<dbReference type="PaxDb" id="273057-SSO0719"/>
<dbReference type="EnsemblBacteria" id="AAK41018">
    <property type="protein sequence ID" value="AAK41018"/>
    <property type="gene ID" value="SSO0719"/>
</dbReference>
<dbReference type="KEGG" id="sso:SSO0719"/>
<dbReference type="PATRIC" id="fig|273057.12.peg.718"/>
<dbReference type="eggNOG" id="arCOG04070">
    <property type="taxonomic scope" value="Archaea"/>
</dbReference>
<dbReference type="HOGENOM" id="CLU_033361_2_0_2"/>
<dbReference type="InParanoid" id="Q9UXA8"/>
<dbReference type="PhylomeDB" id="Q9UXA8"/>
<dbReference type="Proteomes" id="UP000001974">
    <property type="component" value="Chromosome"/>
</dbReference>
<dbReference type="GO" id="GO:0022625">
    <property type="term" value="C:cytosolic large ribosomal subunit"/>
    <property type="evidence" value="ECO:0000318"/>
    <property type="project" value="GO_Central"/>
</dbReference>
<dbReference type="GO" id="GO:0003723">
    <property type="term" value="F:RNA binding"/>
    <property type="evidence" value="ECO:0000318"/>
    <property type="project" value="GO_Central"/>
</dbReference>
<dbReference type="GO" id="GO:0019843">
    <property type="term" value="F:rRNA binding"/>
    <property type="evidence" value="ECO:0007669"/>
    <property type="project" value="UniProtKB-UniRule"/>
</dbReference>
<dbReference type="GO" id="GO:0003735">
    <property type="term" value="F:structural constituent of ribosome"/>
    <property type="evidence" value="ECO:0000318"/>
    <property type="project" value="GO_Central"/>
</dbReference>
<dbReference type="GO" id="GO:0006412">
    <property type="term" value="P:translation"/>
    <property type="evidence" value="ECO:0000318"/>
    <property type="project" value="GO_Central"/>
</dbReference>
<dbReference type="Gene3D" id="3.30.1430.10">
    <property type="match status" value="1"/>
</dbReference>
<dbReference type="Gene3D" id="4.10.960.10">
    <property type="entry name" value="Ribosomal protein L3, domain 3"/>
    <property type="match status" value="1"/>
</dbReference>
<dbReference type="Gene3D" id="2.40.30.10">
    <property type="entry name" value="Translation factors"/>
    <property type="match status" value="1"/>
</dbReference>
<dbReference type="HAMAP" id="MF_01325_A">
    <property type="entry name" value="Ribosomal_uL3_A"/>
    <property type="match status" value="1"/>
</dbReference>
<dbReference type="InterPro" id="IPR045077">
    <property type="entry name" value="L3_arc_euk"/>
</dbReference>
<dbReference type="InterPro" id="IPR044892">
    <property type="entry name" value="Ribosomal_L3_dom_3_arc_sf"/>
</dbReference>
<dbReference type="InterPro" id="IPR000597">
    <property type="entry name" value="Ribosomal_uL3"/>
</dbReference>
<dbReference type="InterPro" id="IPR019928">
    <property type="entry name" value="Ribosomal_uL3_arc"/>
</dbReference>
<dbReference type="InterPro" id="IPR019926">
    <property type="entry name" value="Ribosomal_uL3_CS"/>
</dbReference>
<dbReference type="InterPro" id="IPR009000">
    <property type="entry name" value="Transl_B-barrel_sf"/>
</dbReference>
<dbReference type="NCBIfam" id="TIGR03626">
    <property type="entry name" value="L3_arch"/>
    <property type="match status" value="1"/>
</dbReference>
<dbReference type="NCBIfam" id="NF003261">
    <property type="entry name" value="PRK04231.1"/>
    <property type="match status" value="1"/>
</dbReference>
<dbReference type="PANTHER" id="PTHR11363">
    <property type="entry name" value="60S RIBOSOMAL PROTEIN L3-RELATED"/>
    <property type="match status" value="1"/>
</dbReference>
<dbReference type="PANTHER" id="PTHR11363:SF5">
    <property type="entry name" value="LARGE RIBOSOMAL SUBUNIT PROTEIN UL3"/>
    <property type="match status" value="1"/>
</dbReference>
<dbReference type="Pfam" id="PF00297">
    <property type="entry name" value="Ribosomal_L3"/>
    <property type="match status" value="1"/>
</dbReference>
<dbReference type="SUPFAM" id="SSF50447">
    <property type="entry name" value="Translation proteins"/>
    <property type="match status" value="1"/>
</dbReference>
<dbReference type="PROSITE" id="PS00474">
    <property type="entry name" value="RIBOSOMAL_L3"/>
    <property type="match status" value="1"/>
</dbReference>
<reference key="1">
    <citation type="journal article" date="2000" name="Genome">
        <title>Gene content and organization of a 281-kbp contig from the genome of the extremely thermophilic archaeon, Sulfolobus solfataricus P2.</title>
        <authorList>
            <person name="Charlebois R.L."/>
            <person name="Singh R.K."/>
            <person name="Chan-Weiher C.C.-Y."/>
            <person name="Allard G."/>
            <person name="Chow C."/>
            <person name="Confalonieri F."/>
            <person name="Curtis B."/>
            <person name="Duguet M."/>
            <person name="Erauso G."/>
            <person name="Faguy D."/>
            <person name="Gaasterland T."/>
            <person name="Garrett R.A."/>
            <person name="Gordon P."/>
            <person name="Jeffries A.C."/>
            <person name="Kozera C."/>
            <person name="Kushwaha N."/>
            <person name="Lafleur E."/>
            <person name="Medina N."/>
            <person name="Peng X."/>
            <person name="Penny S.L."/>
            <person name="She Q."/>
            <person name="St Jean A."/>
            <person name="van der Oost J."/>
            <person name="Young F."/>
            <person name="Zivanovic Y."/>
            <person name="Doolittle W.F."/>
            <person name="Ragan M.A."/>
            <person name="Sensen C.W."/>
        </authorList>
    </citation>
    <scope>NUCLEOTIDE SEQUENCE [LARGE SCALE GENOMIC DNA]</scope>
    <source>
        <strain>ATCC 35092 / DSM 1617 / JCM 11322 / P2</strain>
    </source>
</reference>
<reference key="2">
    <citation type="journal article" date="2001" name="Proc. Natl. Acad. Sci. U.S.A.">
        <title>The complete genome of the crenarchaeon Sulfolobus solfataricus P2.</title>
        <authorList>
            <person name="She Q."/>
            <person name="Singh R.K."/>
            <person name="Confalonieri F."/>
            <person name="Zivanovic Y."/>
            <person name="Allard G."/>
            <person name="Awayez M.J."/>
            <person name="Chan-Weiher C.C.-Y."/>
            <person name="Clausen I.G."/>
            <person name="Curtis B.A."/>
            <person name="De Moors A."/>
            <person name="Erauso G."/>
            <person name="Fletcher C."/>
            <person name="Gordon P.M.K."/>
            <person name="Heikamp-de Jong I."/>
            <person name="Jeffries A.C."/>
            <person name="Kozera C.J."/>
            <person name="Medina N."/>
            <person name="Peng X."/>
            <person name="Thi-Ngoc H.P."/>
            <person name="Redder P."/>
            <person name="Schenk M.E."/>
            <person name="Theriault C."/>
            <person name="Tolstrup N."/>
            <person name="Charlebois R.L."/>
            <person name="Doolittle W.F."/>
            <person name="Duguet M."/>
            <person name="Gaasterland T."/>
            <person name="Garrett R.A."/>
            <person name="Ragan M.A."/>
            <person name="Sensen C.W."/>
            <person name="Van der Oost J."/>
        </authorList>
    </citation>
    <scope>NUCLEOTIDE SEQUENCE [LARGE SCALE GENOMIC DNA]</scope>
    <source>
        <strain>ATCC 35092 / DSM 1617 / JCM 11322 / P2</strain>
    </source>
</reference>
<keyword id="KW-1185">Reference proteome</keyword>
<keyword id="KW-0687">Ribonucleoprotein</keyword>
<keyword id="KW-0689">Ribosomal protein</keyword>
<keyword id="KW-0694">RNA-binding</keyword>
<keyword id="KW-0699">rRNA-binding</keyword>
<protein>
    <recommendedName>
        <fullName evidence="1">Large ribosomal subunit protein uL3</fullName>
    </recommendedName>
    <alternativeName>
        <fullName evidence="3">50S ribosomal protein L3</fullName>
    </alternativeName>
</protein>
<sequence>MGHRKLASPRRGSAGLRPRKRSSELLPTPRTWPQINSQNPKLLGFVGYKVGMTHVFMIDDWPNSPTNGKEIYMPVTVLEVPPIIPLALRAYAIDGKGEPNVITEYWSSSSLQFLDITRRIHSISSFLKDDESKKKFDERFNTKLDLIKSNLDRIVYFRLLVSTQPRKIPSLGKKAPDLVEIQIGGGEKKSQLDYALNILGKEITIRDVFKEGQLIDVVGVTKGKGFAGVIKRYSVVELPRWHKHRKGSRKIGTRGPSLGTPSYTPQPGQLGFHRRTEYNKRIIKIGDEPKEINPAGGFVRYGIVRNTYVLLEGSILGSKKRPIFLREPVRPSYVFENPPKITYVNLLSQQG</sequence>
<name>RL3_SACS2</name>
<organism>
    <name type="scientific">Saccharolobus solfataricus (strain ATCC 35092 / DSM 1617 / JCM 11322 / P2)</name>
    <name type="common">Sulfolobus solfataricus</name>
    <dbReference type="NCBI Taxonomy" id="273057"/>
    <lineage>
        <taxon>Archaea</taxon>
        <taxon>Thermoproteota</taxon>
        <taxon>Thermoprotei</taxon>
        <taxon>Sulfolobales</taxon>
        <taxon>Sulfolobaceae</taxon>
        <taxon>Saccharolobus</taxon>
    </lineage>
</organism>
<accession>Q9UXA8</accession>